<accession>A0AV96</accession>
<accession>A0PJK2</accession>
<accession>B5MED4</accession>
<accession>Q8NI52</accession>
<accession>Q8NI53</accession>
<accession>Q9NXG3</accession>
<gene>
    <name evidence="17" type="primary">RBM47</name>
</gene>
<dbReference type="EMBL" id="AF261889">
    <property type="protein sequence ID" value="AAM21972.1"/>
    <property type="molecule type" value="Genomic_DNA"/>
</dbReference>
<dbReference type="EMBL" id="AF262323">
    <property type="protein sequence ID" value="AAM21973.1"/>
    <property type="status" value="ALT_FRAME"/>
    <property type="molecule type" value="mRNA"/>
</dbReference>
<dbReference type="EMBL" id="AK000280">
    <property type="protein sequence ID" value="BAA91049.1"/>
    <property type="molecule type" value="mRNA"/>
</dbReference>
<dbReference type="EMBL" id="AC098869">
    <property type="status" value="NOT_ANNOTATED_CDS"/>
    <property type="molecule type" value="Genomic_DNA"/>
</dbReference>
<dbReference type="EMBL" id="AC112717">
    <property type="status" value="NOT_ANNOTATED_CDS"/>
    <property type="molecule type" value="Genomic_DNA"/>
</dbReference>
<dbReference type="EMBL" id="BC034402">
    <property type="protein sequence ID" value="AAH34402.1"/>
    <property type="molecule type" value="mRNA"/>
</dbReference>
<dbReference type="EMBL" id="BC126261">
    <property type="protein sequence ID" value="AAI26262.1"/>
    <property type="molecule type" value="mRNA"/>
</dbReference>
<dbReference type="CCDS" id="CCDS3460.1">
    <molecule id="A0AV96-2"/>
</dbReference>
<dbReference type="CCDS" id="CCDS43223.1">
    <molecule id="A0AV96-1"/>
</dbReference>
<dbReference type="RefSeq" id="NP_001092104.1">
    <molecule id="A0AV96-1"/>
    <property type="nucleotide sequence ID" value="NM_001098634.2"/>
</dbReference>
<dbReference type="RefSeq" id="NP_001358042.1">
    <molecule id="A0AV96-1"/>
    <property type="nucleotide sequence ID" value="NM_001371113.1"/>
</dbReference>
<dbReference type="RefSeq" id="NP_061900.2">
    <molecule id="A0AV96-2"/>
    <property type="nucleotide sequence ID" value="NM_019027.4"/>
</dbReference>
<dbReference type="RefSeq" id="XP_005248160.1">
    <molecule id="A0AV96-1"/>
    <property type="nucleotide sequence ID" value="XM_005248103.5"/>
</dbReference>
<dbReference type="RefSeq" id="XP_005248164.1">
    <property type="nucleotide sequence ID" value="XM_005248107.3"/>
</dbReference>
<dbReference type="RefSeq" id="XP_005248165.1">
    <molecule id="A0AV96-1"/>
    <property type="nucleotide sequence ID" value="XM_005248108.5"/>
</dbReference>
<dbReference type="RefSeq" id="XP_005248166.1">
    <molecule id="A0AV96-1"/>
    <property type="nucleotide sequence ID" value="XM_005248109.5"/>
</dbReference>
<dbReference type="RefSeq" id="XP_011512006.1">
    <property type="nucleotide sequence ID" value="XM_011513704.2"/>
</dbReference>
<dbReference type="RefSeq" id="XP_011512009.1">
    <molecule id="A0AV96-1"/>
    <property type="nucleotide sequence ID" value="XM_011513707.3"/>
</dbReference>
<dbReference type="RefSeq" id="XP_011512010.1">
    <molecule id="A0AV96-1"/>
    <property type="nucleotide sequence ID" value="XM_011513708.3"/>
</dbReference>
<dbReference type="RefSeq" id="XP_016863793.1">
    <molecule id="A0AV96-1"/>
    <property type="nucleotide sequence ID" value="XM_017008304.3"/>
</dbReference>
<dbReference type="RefSeq" id="XP_016863794.1">
    <property type="nucleotide sequence ID" value="XM_017008305.1"/>
</dbReference>
<dbReference type="RefSeq" id="XP_016863795.1">
    <property type="nucleotide sequence ID" value="XM_017008306.1"/>
</dbReference>
<dbReference type="RefSeq" id="XP_016863796.1">
    <property type="nucleotide sequence ID" value="XM_017008307.1"/>
</dbReference>
<dbReference type="RefSeq" id="XP_016863797.1">
    <molecule id="A0AV96-1"/>
    <property type="nucleotide sequence ID" value="XM_017008308.2"/>
</dbReference>
<dbReference type="RefSeq" id="XP_016863799.1">
    <molecule id="A0AV96-2"/>
    <property type="nucleotide sequence ID" value="XM_017008310.3"/>
</dbReference>
<dbReference type="RefSeq" id="XP_047271752.1">
    <molecule id="A0AV96-1"/>
    <property type="nucleotide sequence ID" value="XM_047415796.1"/>
</dbReference>
<dbReference type="RefSeq" id="XP_047271753.1">
    <molecule id="A0AV96-1"/>
    <property type="nucleotide sequence ID" value="XM_047415797.1"/>
</dbReference>
<dbReference type="RefSeq" id="XP_047271754.1">
    <molecule id="A0AV96-1"/>
    <property type="nucleotide sequence ID" value="XM_047415798.1"/>
</dbReference>
<dbReference type="RefSeq" id="XP_047271756.1">
    <molecule id="A0AV96-1"/>
    <property type="nucleotide sequence ID" value="XM_047415800.1"/>
</dbReference>
<dbReference type="RefSeq" id="XP_047271757.1">
    <molecule id="A0AV96-1"/>
    <property type="nucleotide sequence ID" value="XM_047415801.1"/>
</dbReference>
<dbReference type="RefSeq" id="XP_047271758.1">
    <molecule id="A0AV96-1"/>
    <property type="nucleotide sequence ID" value="XM_047415802.1"/>
</dbReference>
<dbReference type="RefSeq" id="XP_047271773.1">
    <molecule id="A0AV96-2"/>
    <property type="nucleotide sequence ID" value="XM_047415817.1"/>
</dbReference>
<dbReference type="RefSeq" id="XP_047271774.1">
    <molecule id="A0AV96-2"/>
    <property type="nucleotide sequence ID" value="XM_047415818.1"/>
</dbReference>
<dbReference type="RefSeq" id="XP_047271775.1">
    <molecule id="A0AV96-2"/>
    <property type="nucleotide sequence ID" value="XM_047415819.1"/>
</dbReference>
<dbReference type="RefSeq" id="XP_047271776.1">
    <molecule id="A0AV96-2"/>
    <property type="nucleotide sequence ID" value="XM_047415820.1"/>
</dbReference>
<dbReference type="RefSeq" id="XP_047271777.1">
    <molecule id="A0AV96-2"/>
    <property type="nucleotide sequence ID" value="XM_047415821.1"/>
</dbReference>
<dbReference type="RefSeq" id="XP_047271778.1">
    <molecule id="A0AV96-2"/>
    <property type="nucleotide sequence ID" value="XM_047415822.1"/>
</dbReference>
<dbReference type="RefSeq" id="XP_047271779.1">
    <molecule id="A0AV96-2"/>
    <property type="nucleotide sequence ID" value="XM_047415823.1"/>
</dbReference>
<dbReference type="RefSeq" id="XP_047271780.1">
    <molecule id="A0AV96-2"/>
    <property type="nucleotide sequence ID" value="XM_047415824.1"/>
</dbReference>
<dbReference type="RefSeq" id="XP_054206187.1">
    <molecule id="A0AV96-1"/>
    <property type="nucleotide sequence ID" value="XM_054350212.1"/>
</dbReference>
<dbReference type="RefSeq" id="XP_054206188.1">
    <molecule id="A0AV96-1"/>
    <property type="nucleotide sequence ID" value="XM_054350213.1"/>
</dbReference>
<dbReference type="RefSeq" id="XP_054206189.1">
    <molecule id="A0AV96-1"/>
    <property type="nucleotide sequence ID" value="XM_054350214.1"/>
</dbReference>
<dbReference type="RefSeq" id="XP_054206190.1">
    <molecule id="A0AV96-1"/>
    <property type="nucleotide sequence ID" value="XM_054350215.1"/>
</dbReference>
<dbReference type="RefSeq" id="XP_054206191.1">
    <molecule id="A0AV96-1"/>
    <property type="nucleotide sequence ID" value="XM_054350216.1"/>
</dbReference>
<dbReference type="RefSeq" id="XP_054206192.1">
    <molecule id="A0AV96-1"/>
    <property type="nucleotide sequence ID" value="XM_054350217.1"/>
</dbReference>
<dbReference type="RefSeq" id="XP_054206193.1">
    <molecule id="A0AV96-1"/>
    <property type="nucleotide sequence ID" value="XM_054350218.1"/>
</dbReference>
<dbReference type="RefSeq" id="XP_054206194.1">
    <molecule id="A0AV96-1"/>
    <property type="nucleotide sequence ID" value="XM_054350219.1"/>
</dbReference>
<dbReference type="RefSeq" id="XP_054206195.1">
    <molecule id="A0AV96-1"/>
    <property type="nucleotide sequence ID" value="XM_054350220.1"/>
</dbReference>
<dbReference type="RefSeq" id="XP_054206196.1">
    <molecule id="A0AV96-1"/>
    <property type="nucleotide sequence ID" value="XM_054350221.1"/>
</dbReference>
<dbReference type="RefSeq" id="XP_054206197.1">
    <molecule id="A0AV96-1"/>
    <property type="nucleotide sequence ID" value="XM_054350222.1"/>
</dbReference>
<dbReference type="RefSeq" id="XP_054206198.1">
    <molecule id="A0AV96-1"/>
    <property type="nucleotide sequence ID" value="XM_054350223.1"/>
</dbReference>
<dbReference type="RefSeq" id="XP_054206199.1">
    <molecule id="A0AV96-1"/>
    <property type="nucleotide sequence ID" value="XM_054350224.1"/>
</dbReference>
<dbReference type="RefSeq" id="XP_054206213.1">
    <molecule id="A0AV96-2"/>
    <property type="nucleotide sequence ID" value="XM_054350238.1"/>
</dbReference>
<dbReference type="RefSeq" id="XP_054206214.1">
    <molecule id="A0AV96-2"/>
    <property type="nucleotide sequence ID" value="XM_054350239.1"/>
</dbReference>
<dbReference type="RefSeq" id="XP_054206215.1">
    <molecule id="A0AV96-2"/>
    <property type="nucleotide sequence ID" value="XM_054350240.1"/>
</dbReference>
<dbReference type="RefSeq" id="XP_054206216.1">
    <molecule id="A0AV96-2"/>
    <property type="nucleotide sequence ID" value="XM_054350241.1"/>
</dbReference>
<dbReference type="RefSeq" id="XP_054206217.1">
    <molecule id="A0AV96-2"/>
    <property type="nucleotide sequence ID" value="XM_054350242.1"/>
</dbReference>
<dbReference type="RefSeq" id="XP_054206218.1">
    <molecule id="A0AV96-2"/>
    <property type="nucleotide sequence ID" value="XM_054350243.1"/>
</dbReference>
<dbReference type="RefSeq" id="XP_054206219.1">
    <molecule id="A0AV96-2"/>
    <property type="nucleotide sequence ID" value="XM_054350244.1"/>
</dbReference>
<dbReference type="RefSeq" id="XP_054206220.1">
    <molecule id="A0AV96-2"/>
    <property type="nucleotide sequence ID" value="XM_054350245.1"/>
</dbReference>
<dbReference type="RefSeq" id="XP_054206221.1">
    <molecule id="A0AV96-2"/>
    <property type="nucleotide sequence ID" value="XM_054350246.1"/>
</dbReference>
<dbReference type="RefSeq" id="XP_054206222.1">
    <molecule id="A0AV96-2"/>
    <property type="nucleotide sequence ID" value="XM_054350247.1"/>
</dbReference>
<dbReference type="PDB" id="2DIS">
    <property type="method" value="NMR"/>
    <property type="chains" value="A=150-245"/>
</dbReference>
<dbReference type="PDBsum" id="2DIS"/>
<dbReference type="SMR" id="A0AV96"/>
<dbReference type="BioGRID" id="119998">
    <property type="interactions" value="221"/>
</dbReference>
<dbReference type="FunCoup" id="A0AV96">
    <property type="interactions" value="1696"/>
</dbReference>
<dbReference type="IntAct" id="A0AV96">
    <property type="interactions" value="99"/>
</dbReference>
<dbReference type="STRING" id="9606.ENSP00000295971"/>
<dbReference type="GlyCosmos" id="A0AV96">
    <property type="glycosylation" value="1 site, 1 glycan"/>
</dbReference>
<dbReference type="GlyGen" id="A0AV96">
    <property type="glycosylation" value="2 sites, 1 O-linked glycan (2 sites)"/>
</dbReference>
<dbReference type="iPTMnet" id="A0AV96"/>
<dbReference type="PhosphoSitePlus" id="A0AV96"/>
<dbReference type="SwissPalm" id="A0AV96"/>
<dbReference type="BioMuta" id="RBM47"/>
<dbReference type="jPOST" id="A0AV96"/>
<dbReference type="MassIVE" id="A0AV96"/>
<dbReference type="PaxDb" id="9606-ENSP00000371212"/>
<dbReference type="PeptideAtlas" id="A0AV96"/>
<dbReference type="ProteomicsDB" id="14">
    <molecule id="A0AV96-1"/>
</dbReference>
<dbReference type="ProteomicsDB" id="15">
    <molecule id="A0AV96-2"/>
</dbReference>
<dbReference type="Pumba" id="A0AV96"/>
<dbReference type="Antibodypedia" id="1338">
    <property type="antibodies" value="42 antibodies from 20 providers"/>
</dbReference>
<dbReference type="DNASU" id="54502"/>
<dbReference type="Ensembl" id="ENST00000295971.12">
    <molecule id="A0AV96-1"/>
    <property type="protein sequence ID" value="ENSP00000295971.7"/>
    <property type="gene ID" value="ENSG00000163694.15"/>
</dbReference>
<dbReference type="Ensembl" id="ENST00000381793.6">
    <molecule id="A0AV96-1"/>
    <property type="protein sequence ID" value="ENSP00000371212.2"/>
    <property type="gene ID" value="ENSG00000163694.15"/>
</dbReference>
<dbReference type="Ensembl" id="ENST00000381795.10">
    <molecule id="A0AV96-2"/>
    <property type="protein sequence ID" value="ENSP00000371214.6"/>
    <property type="gene ID" value="ENSG00000163694.15"/>
</dbReference>
<dbReference type="GeneID" id="54502"/>
<dbReference type="KEGG" id="hsa:54502"/>
<dbReference type="MANE-Select" id="ENST00000295971.12">
    <property type="protein sequence ID" value="ENSP00000295971.7"/>
    <property type="RefSeq nucleotide sequence ID" value="NM_001098634.2"/>
    <property type="RefSeq protein sequence ID" value="NP_001092104.1"/>
</dbReference>
<dbReference type="UCSC" id="uc003gvc.3">
    <molecule id="A0AV96-1"/>
    <property type="organism name" value="human"/>
</dbReference>
<dbReference type="AGR" id="HGNC:30358"/>
<dbReference type="CTD" id="54502"/>
<dbReference type="DisGeNET" id="54502"/>
<dbReference type="GeneCards" id="RBM47"/>
<dbReference type="HGNC" id="HGNC:30358">
    <property type="gene designation" value="RBM47"/>
</dbReference>
<dbReference type="HPA" id="ENSG00000163694">
    <property type="expression patterns" value="Low tissue specificity"/>
</dbReference>
<dbReference type="MIM" id="619104">
    <property type="type" value="gene"/>
</dbReference>
<dbReference type="neXtProt" id="NX_A0AV96"/>
<dbReference type="OpenTargets" id="ENSG00000163694"/>
<dbReference type="PharmGKB" id="PA162400825"/>
<dbReference type="VEuPathDB" id="HostDB:ENSG00000163694"/>
<dbReference type="eggNOG" id="KOG0117">
    <property type="taxonomic scope" value="Eukaryota"/>
</dbReference>
<dbReference type="GeneTree" id="ENSGT00940000156979"/>
<dbReference type="InParanoid" id="A0AV96"/>
<dbReference type="OMA" id="VEHMINP"/>
<dbReference type="OrthoDB" id="3800936at2759"/>
<dbReference type="PAN-GO" id="A0AV96">
    <property type="GO annotations" value="2 GO annotations based on evolutionary models"/>
</dbReference>
<dbReference type="PhylomeDB" id="A0AV96"/>
<dbReference type="TreeFam" id="TF314932"/>
<dbReference type="PathwayCommons" id="A0AV96"/>
<dbReference type="SignaLink" id="A0AV96"/>
<dbReference type="BioGRID-ORCS" id="54502">
    <property type="hits" value="29 hits in 1164 CRISPR screens"/>
</dbReference>
<dbReference type="CD-CODE" id="232F8A39">
    <property type="entry name" value="P-body"/>
</dbReference>
<dbReference type="CD-CODE" id="DEE660B4">
    <property type="entry name" value="Stress granule"/>
</dbReference>
<dbReference type="ChiTaRS" id="RBM47">
    <property type="organism name" value="human"/>
</dbReference>
<dbReference type="EvolutionaryTrace" id="A0AV96"/>
<dbReference type="GenomeRNAi" id="54502"/>
<dbReference type="Pharos" id="A0AV96">
    <property type="development level" value="Tbio"/>
</dbReference>
<dbReference type="PRO" id="PR:A0AV96"/>
<dbReference type="Proteomes" id="UP000005640">
    <property type="component" value="Chromosome 4"/>
</dbReference>
<dbReference type="RNAct" id="A0AV96">
    <property type="molecule type" value="protein"/>
</dbReference>
<dbReference type="Bgee" id="ENSG00000163694">
    <property type="expression patterns" value="Expressed in renal medulla and 175 other cell types or tissues"/>
</dbReference>
<dbReference type="ExpressionAtlas" id="A0AV96">
    <property type="expression patterns" value="baseline and differential"/>
</dbReference>
<dbReference type="GO" id="GO:0030895">
    <property type="term" value="C:apolipoprotein B mRNA editing enzyme complex"/>
    <property type="evidence" value="ECO:0000314"/>
    <property type="project" value="UniProtKB"/>
</dbReference>
<dbReference type="GO" id="GO:0005737">
    <property type="term" value="C:cytoplasm"/>
    <property type="evidence" value="ECO:0000314"/>
    <property type="project" value="UniProtKB"/>
</dbReference>
<dbReference type="GO" id="GO:0005634">
    <property type="term" value="C:nucleus"/>
    <property type="evidence" value="ECO:0000314"/>
    <property type="project" value="UniProtKB"/>
</dbReference>
<dbReference type="GO" id="GO:0019899">
    <property type="term" value="F:enzyme binding"/>
    <property type="evidence" value="ECO:0000353"/>
    <property type="project" value="UniProtKB"/>
</dbReference>
<dbReference type="GO" id="GO:0140767">
    <property type="term" value="F:enzyme-substrate adaptor activity"/>
    <property type="evidence" value="ECO:0000314"/>
    <property type="project" value="UniProtKB"/>
</dbReference>
<dbReference type="GO" id="GO:0003730">
    <property type="term" value="F:mRNA 3'-UTR binding"/>
    <property type="evidence" value="ECO:0000314"/>
    <property type="project" value="UniProtKB"/>
</dbReference>
<dbReference type="GO" id="GO:0003729">
    <property type="term" value="F:mRNA binding"/>
    <property type="evidence" value="ECO:0000318"/>
    <property type="project" value="GO_Central"/>
</dbReference>
<dbReference type="GO" id="GO:0003723">
    <property type="term" value="F:RNA binding"/>
    <property type="evidence" value="ECO:0000314"/>
    <property type="project" value="UniProtKB"/>
</dbReference>
<dbReference type="GO" id="GO:0070935">
    <property type="term" value="P:3'-UTR-mediated mRNA stabilization"/>
    <property type="evidence" value="ECO:0000314"/>
    <property type="project" value="UniProtKB"/>
</dbReference>
<dbReference type="GO" id="GO:0016554">
    <property type="term" value="P:cytidine to uridine editing"/>
    <property type="evidence" value="ECO:0000314"/>
    <property type="project" value="UniProtKB"/>
</dbReference>
<dbReference type="GO" id="GO:0002244">
    <property type="term" value="P:hematopoietic progenitor cell differentiation"/>
    <property type="evidence" value="ECO:0007669"/>
    <property type="project" value="Ensembl"/>
</dbReference>
<dbReference type="GO" id="GO:0006397">
    <property type="term" value="P:mRNA processing"/>
    <property type="evidence" value="ECO:0007669"/>
    <property type="project" value="UniProtKB-KW"/>
</dbReference>
<dbReference type="GO" id="GO:0032733">
    <property type="term" value="P:positive regulation of interleukin-10 production"/>
    <property type="evidence" value="ECO:0007669"/>
    <property type="project" value="Ensembl"/>
</dbReference>
<dbReference type="GO" id="GO:0060340">
    <property type="term" value="P:positive regulation of type I interferon-mediated signaling pathway"/>
    <property type="evidence" value="ECO:0000315"/>
    <property type="project" value="UniProtKB"/>
</dbReference>
<dbReference type="GO" id="GO:0000381">
    <property type="term" value="P:regulation of alternative mRNA splicing, via spliceosome"/>
    <property type="evidence" value="ECO:0000314"/>
    <property type="project" value="UniProtKB"/>
</dbReference>
<dbReference type="GO" id="GO:0008380">
    <property type="term" value="P:RNA splicing"/>
    <property type="evidence" value="ECO:0007669"/>
    <property type="project" value="UniProtKB-KW"/>
</dbReference>
<dbReference type="CDD" id="cd12485">
    <property type="entry name" value="RRM1_RBM47"/>
    <property type="match status" value="1"/>
</dbReference>
<dbReference type="CDD" id="cd12491">
    <property type="entry name" value="RRM2_RBM47"/>
    <property type="match status" value="1"/>
</dbReference>
<dbReference type="CDD" id="cd12497">
    <property type="entry name" value="RRM3_RBM47"/>
    <property type="match status" value="1"/>
</dbReference>
<dbReference type="FunFam" id="3.30.70.330:FF:000022">
    <property type="entry name" value="APOBEC1 complementation factor isoform X1"/>
    <property type="match status" value="1"/>
</dbReference>
<dbReference type="FunFam" id="3.30.70.330:FF:000026">
    <property type="entry name" value="APOBEC1 complementation factor isoform X1"/>
    <property type="match status" value="1"/>
</dbReference>
<dbReference type="FunFam" id="3.30.70.330:FF:000146">
    <property type="entry name" value="RNA-binding protein 47 isoform X1"/>
    <property type="match status" value="1"/>
</dbReference>
<dbReference type="Gene3D" id="3.30.70.330">
    <property type="match status" value="3"/>
</dbReference>
<dbReference type="InterPro" id="IPR006535">
    <property type="entry name" value="HnRNP_R/Q_splicing_fac"/>
</dbReference>
<dbReference type="InterPro" id="IPR012677">
    <property type="entry name" value="Nucleotide-bd_a/b_plait_sf"/>
</dbReference>
<dbReference type="InterPro" id="IPR035979">
    <property type="entry name" value="RBD_domain_sf"/>
</dbReference>
<dbReference type="InterPro" id="IPR047044">
    <property type="entry name" value="RBM47_RRM1"/>
</dbReference>
<dbReference type="InterPro" id="IPR034440">
    <property type="entry name" value="RBM47_RRM2"/>
</dbReference>
<dbReference type="InterPro" id="IPR034445">
    <property type="entry name" value="RBM47_RRM3"/>
</dbReference>
<dbReference type="InterPro" id="IPR000504">
    <property type="entry name" value="RRM_dom"/>
</dbReference>
<dbReference type="NCBIfam" id="TIGR01648">
    <property type="entry name" value="hnRNP-R-Q"/>
    <property type="match status" value="1"/>
</dbReference>
<dbReference type="PANTHER" id="PTHR21245">
    <property type="entry name" value="HETEROGENEOUS NUCLEAR RIBONUCLEOPROTEIN"/>
    <property type="match status" value="1"/>
</dbReference>
<dbReference type="Pfam" id="PF00076">
    <property type="entry name" value="RRM_1"/>
    <property type="match status" value="3"/>
</dbReference>
<dbReference type="SMART" id="SM00360">
    <property type="entry name" value="RRM"/>
    <property type="match status" value="3"/>
</dbReference>
<dbReference type="SUPFAM" id="SSF54928">
    <property type="entry name" value="RNA-binding domain, RBD"/>
    <property type="match status" value="3"/>
</dbReference>
<dbReference type="PROSITE" id="PS50102">
    <property type="entry name" value="RRM"/>
    <property type="match status" value="3"/>
</dbReference>
<sequence length="593" mass="64099">MTAEDSTAAMSSDSAAGSSAKVPEGVAGAPNEAALLALMERTGYSMVQENGQRKYGGPPPGWEGPHPQRGCEVFVGKIPRDVYEDELVPVFEAVGRIYELRLMMDFDGKNRGYAFVMYCHKHEAKRAVRELNNYEIRPGRLLGVCCSVDNCRLFIGGIPKMKKREEILEEIAKVTEGVLDVIVYASAADKMKNRGFAFVEYESHRAAAMARRKLMPGRIQLWGHQIAVDWAEPEIDVDEDVMETVKILYVRNLMIETTEDTIKKSFGQFNPGCVERVKKIRDYAFVHFTSREDAVHAMNNLNGTELEGSCLEVTLAKPVDKEQYSRYQKAARGGGAAEAAQQPSYVYSCDPYTLAYYGYPYNALIGPNRDYFVKAGSIRGRGRGAAGNRAPGPRGSYLGGYSAGRGIYSRYHEGKGKQQEKGYELVPNLEIPTVNPVAIKPGTVAIPAIGAQYSMFPAAPAPKMIEDGKIHTVEHMISPIAVQPDPASAAAAAAAAAAAAAAVIPTVSTPPPFQGRPITPVYTVAPNVQRIPTAGIYGASYVPFAAPATATIATLQKNAAAAAAMYGGYAGYIPQAFPAAAIQVPIPDVYQTY</sequence>
<keyword id="KW-0002">3D-structure</keyword>
<keyword id="KW-0025">Alternative splicing</keyword>
<keyword id="KW-0963">Cytoplasm</keyword>
<keyword id="KW-0488">Methylation</keyword>
<keyword id="KW-0507">mRNA processing</keyword>
<keyword id="KW-0508">mRNA splicing</keyword>
<keyword id="KW-0539">Nucleus</keyword>
<keyword id="KW-1267">Proteomics identification</keyword>
<keyword id="KW-1185">Reference proteome</keyword>
<keyword id="KW-0677">Repeat</keyword>
<keyword id="KW-0694">RNA-binding</keyword>
<comment type="function">
    <text evidence="1 6 7 8 9 10 11">Single-stranded RNA-binding protein that functions in a variety of RNA processes, including alternative splicing, RNA stabilization, and RNA editing (PubMed:24038582, PubMed:24916387, PubMed:27050523, PubMed:30844405, PubMed:31358901, PubMed:34160127). Functions as an enzyme-substrate adapter for the cytidine deaminase APOBEC1. With APOBEC1 forms an mRNA editing complex involved into cytidine to uridine editing of a variety of mRNA molecules (PubMed:24038582, PubMed:24916387, PubMed:30844405). Through the binding of their 3'UTR, also stabilizes a variety of mRNAs and regulates the expression of genes such as the interferon alpha/beta receptor and interleukin-10 (PubMed:34160127). Also involved in the alternative splicing of several genes including TJP1. Binds the pre-mRNA (U)GCAUG consensus sequences in downstream intronic regions of alternative exons, regulating their exclusion and inclusion into mRNAs (PubMed:27050523, PubMed:31358901). Independently of its RNA-binding activity, could negatively regulate MAVS by promoting its lysosomal degradation (By similarity).</text>
</comment>
<comment type="subunit">
    <text evidence="7 10 12">Homodimer (PubMed:31358901). Interacts with A1CF (PubMed:24916387). Interacts with APOBEC1; form an mRNA editing complex (PubMed:24916387). Interacts with RBPMS (PubMed:37548402).</text>
</comment>
<comment type="interaction">
    <interactant intactId="EBI-2823850">
        <id>A0AV96</id>
    </interactant>
    <interactant intactId="EBI-12809220">
        <id>Q5SWW7</id>
        <label>C10orf55</label>
    </interactant>
    <organismsDiffer>false</organismsDiffer>
    <experiments>3</experiments>
</comment>
<comment type="interaction">
    <interactant intactId="EBI-2823850">
        <id>A0AV96</id>
    </interactant>
    <interactant intactId="EBI-946029">
        <id>Q6P1W5</id>
        <label>C1orf94</label>
    </interactant>
    <organismsDiffer>false</organismsDiffer>
    <experiments>3</experiments>
</comment>
<comment type="interaction">
    <interactant intactId="EBI-2823850">
        <id>A0AV96</id>
    </interactant>
    <interactant intactId="EBI-1383687">
        <id>Q9UQM7</id>
        <label>CAMK2A</label>
    </interactant>
    <organismsDiffer>false</organismsDiffer>
    <experiments>3</experiments>
</comment>
<comment type="interaction">
    <interactant intactId="EBI-2823850">
        <id>A0AV96</id>
    </interactant>
    <interactant intactId="EBI-12139335">
        <id>Q8N6W0</id>
        <label>CELF5</label>
    </interactant>
    <organismsDiffer>false</organismsDiffer>
    <experiments>3</experiments>
</comment>
<comment type="interaction">
    <interactant intactId="EBI-2823850">
        <id>A0AV96</id>
    </interactant>
    <interactant intactId="EBI-10220102">
        <id>B7ZLH0</id>
        <label>FAM22F</label>
    </interactant>
    <organismsDiffer>false</organismsDiffer>
    <experiments>3</experiments>
</comment>
<comment type="interaction">
    <interactant intactId="EBI-2823850">
        <id>A0AV96</id>
    </interactant>
    <interactant intactId="EBI-9087860">
        <id>P32243-2</id>
        <label>OTX2</label>
    </interactant>
    <organismsDiffer>false</organismsDiffer>
    <experiments>3</experiments>
</comment>
<comment type="interaction">
    <interactant intactId="EBI-2823850">
        <id>A0AV96</id>
    </interactant>
    <interactant intactId="EBI-11983983">
        <id>P57721-2</id>
        <label>PCBP3</label>
    </interactant>
    <organismsDiffer>false</organismsDiffer>
    <experiments>3</experiments>
</comment>
<comment type="interaction">
    <interactant intactId="EBI-2823850">
        <id>A0AV96</id>
    </interactant>
    <interactant intactId="EBI-740924">
        <id>Q9NZ81</id>
        <label>PRR13</label>
    </interactant>
    <organismsDiffer>false</organismsDiffer>
    <experiments>3</experiments>
</comment>
<comment type="interaction">
    <interactant intactId="EBI-2823850">
        <id>A0AV96</id>
    </interactant>
    <interactant intactId="EBI-12123390">
        <id>Q9NWB1-5</id>
        <label>RBFOX1</label>
    </interactant>
    <organismsDiffer>false</organismsDiffer>
    <experiments>3</experiments>
</comment>
<comment type="interaction">
    <interactant intactId="EBI-2823850">
        <id>A0AV96</id>
    </interactant>
    <interactant intactId="EBI-12068216">
        <id>Q8TBY0</id>
        <label>RBM46</label>
    </interactant>
    <organismsDiffer>false</organismsDiffer>
    <experiments>2</experiments>
</comment>
<comment type="interaction">
    <interactant intactId="EBI-2823850">
        <id>A0AV96</id>
    </interactant>
    <interactant intactId="EBI-12055653">
        <id>Q66K41-2</id>
        <label>ZNF385C</label>
    </interactant>
    <organismsDiffer>false</organismsDiffer>
    <experiments>3</experiments>
</comment>
<comment type="subcellular location">
    <subcellularLocation>
        <location evidence="6 7">Nucleus</location>
    </subcellularLocation>
    <subcellularLocation>
        <location evidence="7">Cytoplasm</location>
    </subcellularLocation>
</comment>
<comment type="alternative products">
    <event type="alternative splicing"/>
    <isoform>
        <id>A0AV96-1</id>
        <name>1</name>
        <name evidence="14">h-isoform a</name>
        <sequence type="displayed"/>
    </isoform>
    <isoform>
        <id>A0AV96-2</id>
        <name>2</name>
        <name evidence="14">h-isoform b</name>
        <sequence type="described" ref="VSP_028839"/>
    </isoform>
</comment>
<comment type="induction">
    <text evidence="11">Up-regulated by interferon.</text>
</comment>
<comment type="domain">
    <text evidence="11">The RRM domains are required for mRNA stabilization.</text>
</comment>
<comment type="similarity">
    <text evidence="15">Belongs to the RRM RBM47 family.</text>
</comment>
<comment type="sequence caution" evidence="15">
    <conflict type="frameshift">
        <sequence resource="EMBL-CDS" id="AAM21973"/>
    </conflict>
</comment>
<reference key="1">
    <citation type="submission" date="2000-05" db="EMBL/GenBank/DDBJ databases">
        <title>SPICE cloning and characterization of a human cDNA encoding a novel RNA-binding protein.</title>
        <authorList>
            <person name="Wang A."/>
            <person name="Gonzalez-Santos J.M."/>
            <person name="Hu J."/>
        </authorList>
    </citation>
    <scope>NUCLEOTIDE SEQUENCE [GENOMIC DNA / MRNA] (ISOFORM 1)</scope>
    <source>
        <tissue>Lung</tissue>
    </source>
</reference>
<reference key="2">
    <citation type="journal article" date="2004" name="Nat. Genet.">
        <title>Complete sequencing and characterization of 21,243 full-length human cDNAs.</title>
        <authorList>
            <person name="Ota T."/>
            <person name="Suzuki Y."/>
            <person name="Nishikawa T."/>
            <person name="Otsuki T."/>
            <person name="Sugiyama T."/>
            <person name="Irie R."/>
            <person name="Wakamatsu A."/>
            <person name="Hayashi K."/>
            <person name="Sato H."/>
            <person name="Nagai K."/>
            <person name="Kimura K."/>
            <person name="Makita H."/>
            <person name="Sekine M."/>
            <person name="Obayashi M."/>
            <person name="Nishi T."/>
            <person name="Shibahara T."/>
            <person name="Tanaka T."/>
            <person name="Ishii S."/>
            <person name="Yamamoto J."/>
            <person name="Saito K."/>
            <person name="Kawai Y."/>
            <person name="Isono Y."/>
            <person name="Nakamura Y."/>
            <person name="Nagahari K."/>
            <person name="Murakami K."/>
            <person name="Yasuda T."/>
            <person name="Iwayanagi T."/>
            <person name="Wagatsuma M."/>
            <person name="Shiratori A."/>
            <person name="Sudo H."/>
            <person name="Hosoiri T."/>
            <person name="Kaku Y."/>
            <person name="Kodaira H."/>
            <person name="Kondo H."/>
            <person name="Sugawara M."/>
            <person name="Takahashi M."/>
            <person name="Kanda K."/>
            <person name="Yokoi T."/>
            <person name="Furuya T."/>
            <person name="Kikkawa E."/>
            <person name="Omura Y."/>
            <person name="Abe K."/>
            <person name="Kamihara K."/>
            <person name="Katsuta N."/>
            <person name="Sato K."/>
            <person name="Tanikawa M."/>
            <person name="Yamazaki M."/>
            <person name="Ninomiya K."/>
            <person name="Ishibashi T."/>
            <person name="Yamashita H."/>
            <person name="Murakawa K."/>
            <person name="Fujimori K."/>
            <person name="Tanai H."/>
            <person name="Kimata M."/>
            <person name="Watanabe M."/>
            <person name="Hiraoka S."/>
            <person name="Chiba Y."/>
            <person name="Ishida S."/>
            <person name="Ono Y."/>
            <person name="Takiguchi S."/>
            <person name="Watanabe S."/>
            <person name="Yosida M."/>
            <person name="Hotuta T."/>
            <person name="Kusano J."/>
            <person name="Kanehori K."/>
            <person name="Takahashi-Fujii A."/>
            <person name="Hara H."/>
            <person name="Tanase T.-O."/>
            <person name="Nomura Y."/>
            <person name="Togiya S."/>
            <person name="Komai F."/>
            <person name="Hara R."/>
            <person name="Takeuchi K."/>
            <person name="Arita M."/>
            <person name="Imose N."/>
            <person name="Musashino K."/>
            <person name="Yuuki H."/>
            <person name="Oshima A."/>
            <person name="Sasaki N."/>
            <person name="Aotsuka S."/>
            <person name="Yoshikawa Y."/>
            <person name="Matsunawa H."/>
            <person name="Ichihara T."/>
            <person name="Shiohata N."/>
            <person name="Sano S."/>
            <person name="Moriya S."/>
            <person name="Momiyama H."/>
            <person name="Satoh N."/>
            <person name="Takami S."/>
            <person name="Terashima Y."/>
            <person name="Suzuki O."/>
            <person name="Nakagawa S."/>
            <person name="Senoh A."/>
            <person name="Mizoguchi H."/>
            <person name="Goto Y."/>
            <person name="Shimizu F."/>
            <person name="Wakebe H."/>
            <person name="Hishigaki H."/>
            <person name="Watanabe T."/>
            <person name="Sugiyama A."/>
            <person name="Takemoto M."/>
            <person name="Kawakami B."/>
            <person name="Yamazaki M."/>
            <person name="Watanabe K."/>
            <person name="Kumagai A."/>
            <person name="Itakura S."/>
            <person name="Fukuzumi Y."/>
            <person name="Fujimori Y."/>
            <person name="Komiyama M."/>
            <person name="Tashiro H."/>
            <person name="Tanigami A."/>
            <person name="Fujiwara T."/>
            <person name="Ono T."/>
            <person name="Yamada K."/>
            <person name="Fujii Y."/>
            <person name="Ozaki K."/>
            <person name="Hirao M."/>
            <person name="Ohmori Y."/>
            <person name="Kawabata A."/>
            <person name="Hikiji T."/>
            <person name="Kobatake N."/>
            <person name="Inagaki H."/>
            <person name="Ikema Y."/>
            <person name="Okamoto S."/>
            <person name="Okitani R."/>
            <person name="Kawakami T."/>
            <person name="Noguchi S."/>
            <person name="Itoh T."/>
            <person name="Shigeta K."/>
            <person name="Senba T."/>
            <person name="Matsumura K."/>
            <person name="Nakajima Y."/>
            <person name="Mizuno T."/>
            <person name="Morinaga M."/>
            <person name="Sasaki M."/>
            <person name="Togashi T."/>
            <person name="Oyama M."/>
            <person name="Hata H."/>
            <person name="Watanabe M."/>
            <person name="Komatsu T."/>
            <person name="Mizushima-Sugano J."/>
            <person name="Satoh T."/>
            <person name="Shirai Y."/>
            <person name="Takahashi Y."/>
            <person name="Nakagawa K."/>
            <person name="Okumura K."/>
            <person name="Nagase T."/>
            <person name="Nomura N."/>
            <person name="Kikuchi H."/>
            <person name="Masuho Y."/>
            <person name="Yamashita R."/>
            <person name="Nakai K."/>
            <person name="Yada T."/>
            <person name="Nakamura Y."/>
            <person name="Ohara O."/>
            <person name="Isogai T."/>
            <person name="Sugano S."/>
        </authorList>
    </citation>
    <scope>NUCLEOTIDE SEQUENCE [LARGE SCALE MRNA] (ISOFORM 2)</scope>
    <scope>VARIANT VAL-565</scope>
</reference>
<reference key="3">
    <citation type="journal article" date="2005" name="Nature">
        <title>Generation and annotation of the DNA sequences of human chromosomes 2 and 4.</title>
        <authorList>
            <person name="Hillier L.W."/>
            <person name="Graves T.A."/>
            <person name="Fulton R.S."/>
            <person name="Fulton L.A."/>
            <person name="Pepin K.H."/>
            <person name="Minx P."/>
            <person name="Wagner-McPherson C."/>
            <person name="Layman D."/>
            <person name="Wylie K."/>
            <person name="Sekhon M."/>
            <person name="Becker M.C."/>
            <person name="Fewell G.A."/>
            <person name="Delehaunty K.D."/>
            <person name="Miner T.L."/>
            <person name="Nash W.E."/>
            <person name="Kremitzki C."/>
            <person name="Oddy L."/>
            <person name="Du H."/>
            <person name="Sun H."/>
            <person name="Bradshaw-Cordum H."/>
            <person name="Ali J."/>
            <person name="Carter J."/>
            <person name="Cordes M."/>
            <person name="Harris A."/>
            <person name="Isak A."/>
            <person name="van Brunt A."/>
            <person name="Nguyen C."/>
            <person name="Du F."/>
            <person name="Courtney L."/>
            <person name="Kalicki J."/>
            <person name="Ozersky P."/>
            <person name="Abbott S."/>
            <person name="Armstrong J."/>
            <person name="Belter E.A."/>
            <person name="Caruso L."/>
            <person name="Cedroni M."/>
            <person name="Cotton M."/>
            <person name="Davidson T."/>
            <person name="Desai A."/>
            <person name="Elliott G."/>
            <person name="Erb T."/>
            <person name="Fronick C."/>
            <person name="Gaige T."/>
            <person name="Haakenson W."/>
            <person name="Haglund K."/>
            <person name="Holmes A."/>
            <person name="Harkins R."/>
            <person name="Kim K."/>
            <person name="Kruchowski S.S."/>
            <person name="Strong C.M."/>
            <person name="Grewal N."/>
            <person name="Goyea E."/>
            <person name="Hou S."/>
            <person name="Levy A."/>
            <person name="Martinka S."/>
            <person name="Mead K."/>
            <person name="McLellan M.D."/>
            <person name="Meyer R."/>
            <person name="Randall-Maher J."/>
            <person name="Tomlinson C."/>
            <person name="Dauphin-Kohlberg S."/>
            <person name="Kozlowicz-Reilly A."/>
            <person name="Shah N."/>
            <person name="Swearengen-Shahid S."/>
            <person name="Snider J."/>
            <person name="Strong J.T."/>
            <person name="Thompson J."/>
            <person name="Yoakum M."/>
            <person name="Leonard S."/>
            <person name="Pearman C."/>
            <person name="Trani L."/>
            <person name="Radionenko M."/>
            <person name="Waligorski J.E."/>
            <person name="Wang C."/>
            <person name="Rock S.M."/>
            <person name="Tin-Wollam A.-M."/>
            <person name="Maupin R."/>
            <person name="Latreille P."/>
            <person name="Wendl M.C."/>
            <person name="Yang S.-P."/>
            <person name="Pohl C."/>
            <person name="Wallis J.W."/>
            <person name="Spieth J."/>
            <person name="Bieri T.A."/>
            <person name="Berkowicz N."/>
            <person name="Nelson J.O."/>
            <person name="Osborne J."/>
            <person name="Ding L."/>
            <person name="Meyer R."/>
            <person name="Sabo A."/>
            <person name="Shotland Y."/>
            <person name="Sinha P."/>
            <person name="Wohldmann P.E."/>
            <person name="Cook L.L."/>
            <person name="Hickenbotham M.T."/>
            <person name="Eldred J."/>
            <person name="Williams D."/>
            <person name="Jones T.A."/>
            <person name="She X."/>
            <person name="Ciccarelli F.D."/>
            <person name="Izaurralde E."/>
            <person name="Taylor J."/>
            <person name="Schmutz J."/>
            <person name="Myers R.M."/>
            <person name="Cox D.R."/>
            <person name="Huang X."/>
            <person name="McPherson J.D."/>
            <person name="Mardis E.R."/>
            <person name="Clifton S.W."/>
            <person name="Warren W.C."/>
            <person name="Chinwalla A.T."/>
            <person name="Eddy S.R."/>
            <person name="Marra M.A."/>
            <person name="Ovcharenko I."/>
            <person name="Furey T.S."/>
            <person name="Miller W."/>
            <person name="Eichler E.E."/>
            <person name="Bork P."/>
            <person name="Suyama M."/>
            <person name="Torrents D."/>
            <person name="Waterston R.H."/>
            <person name="Wilson R.K."/>
        </authorList>
    </citation>
    <scope>NUCLEOTIDE SEQUENCE [LARGE SCALE GENOMIC DNA]</scope>
</reference>
<reference key="4">
    <citation type="journal article" date="2004" name="Genome Res.">
        <title>The status, quality, and expansion of the NIH full-length cDNA project: the Mammalian Gene Collection (MGC).</title>
        <authorList>
            <consortium name="The MGC Project Team"/>
        </authorList>
    </citation>
    <scope>NUCLEOTIDE SEQUENCE [LARGE SCALE MRNA] (ISOFORM 1)</scope>
    <scope>VARIANT VAL-565</scope>
    <source>
        <tissue>Brain</tissue>
    </source>
</reference>
<reference key="5">
    <citation type="journal article" date="2013" name="Dev. Dyn.">
        <title>rbm47, a novel RNA binding protein, regulates zebrafish head development.</title>
        <authorList>
            <person name="Guan R."/>
            <person name="El-Rass S."/>
            <person name="Spillane D."/>
            <person name="Lam S."/>
            <person name="Wang Y."/>
            <person name="Wu J."/>
            <person name="Chen Z."/>
            <person name="Wang A."/>
            <person name="Jia Z."/>
            <person name="Keating A."/>
            <person name="Hu J."/>
            <person name="Wen X.Y."/>
        </authorList>
    </citation>
    <scope>FUNCTION</scope>
    <scope>SUBCELLULAR LOCATION</scope>
    <scope>ALTERNATIVE SPLICING</scope>
</reference>
<reference key="6">
    <citation type="journal article" date="2014" name="EMBO Rep.">
        <title>C to U RNA editing mediated by APOBEC1 requires RNA-binding protein RBM47.</title>
        <authorList>
            <person name="Fossat N."/>
            <person name="Tourle K."/>
            <person name="Radziewic T."/>
            <person name="Barratt K."/>
            <person name="Liebhold D."/>
            <person name="Studdert J.B."/>
            <person name="Power M."/>
            <person name="Jones V."/>
            <person name="Loebel D.A."/>
            <person name="Tam P.P."/>
        </authorList>
    </citation>
    <scope>FUNCTION</scope>
    <scope>SUBCELLULAR LOCATION</scope>
    <scope>INTERACTION WITH A1CF AND APOBEC1</scope>
</reference>
<reference key="7">
    <citation type="journal article" date="2014" name="Mol. Cell. Proteomics">
        <title>Immunoaffinity enrichment and mass spectrometry analysis of protein methylation.</title>
        <authorList>
            <person name="Guo A."/>
            <person name="Gu H."/>
            <person name="Zhou J."/>
            <person name="Mulhern D."/>
            <person name="Wang Y."/>
            <person name="Lee K.A."/>
            <person name="Yang V."/>
            <person name="Aguiar M."/>
            <person name="Kornhauser J."/>
            <person name="Jia X."/>
            <person name="Ren J."/>
            <person name="Beausoleil S.A."/>
            <person name="Silva J.C."/>
            <person name="Vemulapalli V."/>
            <person name="Bedford M.T."/>
            <person name="Comb M.J."/>
        </authorList>
    </citation>
    <scope>METHYLATION [LARGE SCALE ANALYSIS] AT ARG-332; ARG-394 AND ARG-405</scope>
    <scope>IDENTIFICATION BY MASS SPECTROMETRY [LARGE SCALE ANALYSIS]</scope>
    <source>
        <tissue>Colon carcinoma</tissue>
    </source>
</reference>
<reference key="8">
    <citation type="journal article" date="2016" name="Cell Rep.">
        <title>Multiphasic and Dynamic Changes in Alternative Splicing during Induction of Pluripotency Are Coordinated by Numerous RNA-Binding Proteins.</title>
        <authorList>
            <person name="Cieply B."/>
            <person name="Park J.W."/>
            <person name="Nakauka-Ddamba A."/>
            <person name="Bebee T.W."/>
            <person name="Guo Y."/>
            <person name="Shang X."/>
            <person name="Lengner C.J."/>
            <person name="Xing Y."/>
            <person name="Carstens R.P."/>
        </authorList>
    </citation>
    <scope>FUNCTION</scope>
</reference>
<reference key="9">
    <citation type="journal article" date="2019" name="J. Mol. Biol.">
        <title>Comparison of RNA Editing Activity of APOBEC1-A1CF and APOBEC1-RBM47 Complexes Reconstituted in HEK293T Cells.</title>
        <authorList>
            <person name="Wolfe A.D."/>
            <person name="Arnold D.B."/>
            <person name="Chen X.S."/>
        </authorList>
    </citation>
    <scope>FUNCTION</scope>
</reference>
<reference key="10">
    <citation type="journal article" date="2019" name="Oncogene">
        <title>RBM47-regulated alternative splicing of TJP1 promotes actin stress fiber assembly during epithelial-to-mesenchymal transition.</title>
        <authorList>
            <person name="Kim Y.E."/>
            <person name="Won M."/>
            <person name="Lee S.G."/>
            <person name="Park C."/>
            <person name="Song C.H."/>
            <person name="Kim K.K."/>
        </authorList>
    </citation>
    <scope>FUNCTION</scope>
    <scope>SUBUNIT</scope>
    <scope>MUTAGENESIS OF PHE-115; PHE-198 AND PHE-285</scope>
</reference>
<reference key="11">
    <citation type="journal article" date="2021" name="EMBO Rep.">
        <title>RNA-binding protein RBM47 stabilizes IFNAR1 mRNA to potentiate host antiviral activity.</title>
        <authorList>
            <person name="Wang K."/>
            <person name="Huang C."/>
            <person name="Jiang T."/>
            <person name="Chen Z."/>
            <person name="Xue M."/>
            <person name="Zhang Q."/>
            <person name="Zhang J."/>
            <person name="Dai J."/>
        </authorList>
    </citation>
    <scope>FUNCTION</scope>
    <scope>INDUCTION BY INTERFERON</scope>
    <scope>DOMAIN</scope>
</reference>
<reference key="12">
    <citation type="journal article" date="2023" name="Nucleic Acids Res.">
        <title>Cell-type specific regulator RBPMS switches alternative splicing via higher-order oligomerization and heterotypic interactions with other splicing regulators.</title>
        <authorList>
            <person name="Yang Y."/>
            <person name="Lee G.C."/>
            <person name="Nakagaki-Silva E."/>
            <person name="Huang Y."/>
            <person name="Peacey M."/>
            <person name="Partridge R."/>
            <person name="Gooding C."/>
            <person name="Smith C.W.J."/>
        </authorList>
    </citation>
    <scope>INTERACTION WITH RBPMS</scope>
</reference>
<reference key="13">
    <citation type="submission" date="2009-02" db="PDB data bank">
        <title>Solution structure of the RRM domain of unnamed protein product.</title>
        <authorList>
            <consortium name="RIKEN structural genomics initiative (RSGI)"/>
        </authorList>
    </citation>
    <scope>STRUCTURE BY NMR OF 150-245</scope>
</reference>
<protein>
    <recommendedName>
        <fullName evidence="16">RNA-binding protein 47</fullName>
    </recommendedName>
    <alternativeName>
        <fullName evidence="17">RNA-binding motif protein 47</fullName>
    </alternativeName>
</protein>
<organism>
    <name type="scientific">Homo sapiens</name>
    <name type="common">Human</name>
    <dbReference type="NCBI Taxonomy" id="9606"/>
    <lineage>
        <taxon>Eukaryota</taxon>
        <taxon>Metazoa</taxon>
        <taxon>Chordata</taxon>
        <taxon>Craniata</taxon>
        <taxon>Vertebrata</taxon>
        <taxon>Euteleostomi</taxon>
        <taxon>Mammalia</taxon>
        <taxon>Eutheria</taxon>
        <taxon>Euarchontoglires</taxon>
        <taxon>Primates</taxon>
        <taxon>Haplorrhini</taxon>
        <taxon>Catarrhini</taxon>
        <taxon>Hominidae</taxon>
        <taxon>Homo</taxon>
    </lineage>
</organism>
<feature type="chain" id="PRO_0000307855" description="RNA-binding protein 47">
    <location>
        <begin position="1"/>
        <end position="593"/>
    </location>
</feature>
<feature type="domain" description="RRM 1" evidence="2">
    <location>
        <begin position="71"/>
        <end position="149"/>
    </location>
</feature>
<feature type="domain" description="RRM 2" evidence="2">
    <location>
        <begin position="151"/>
        <end position="233"/>
    </location>
</feature>
<feature type="domain" description="RRM 3" evidence="2">
    <location>
        <begin position="246"/>
        <end position="318"/>
    </location>
</feature>
<feature type="region of interest" description="Disordered" evidence="3">
    <location>
        <begin position="1"/>
        <end position="25"/>
    </location>
</feature>
<feature type="compositionally biased region" description="Low complexity" evidence="3">
    <location>
        <begin position="1"/>
        <end position="20"/>
    </location>
</feature>
<feature type="modified residue" description="Omega-N-methylarginine" evidence="18">
    <location>
        <position position="332"/>
    </location>
</feature>
<feature type="modified residue" description="Asymmetric dimethylarginine; alternate" evidence="18">
    <location>
        <position position="394"/>
    </location>
</feature>
<feature type="modified residue" description="Omega-N-methylarginine; alternate" evidence="18">
    <location>
        <position position="394"/>
    </location>
</feature>
<feature type="modified residue" description="Asymmetric dimethylarginine; alternate" evidence="18">
    <location>
        <position position="405"/>
    </location>
</feature>
<feature type="modified residue" description="Omega-N-methylarginine; alternate" evidence="18">
    <location>
        <position position="405"/>
    </location>
</feature>
<feature type="splice variant" id="VSP_028839" description="In isoform 2." evidence="13">
    <location>
        <begin position="375"/>
        <end position="443"/>
    </location>
</feature>
<feature type="sequence variant" id="VAR_061832" description="In dbSNP:rs35529250.">
    <original>G</original>
    <variation>R</variation>
    <location>
        <position position="538"/>
    </location>
</feature>
<feature type="sequence variant" id="VAR_054770" description="In dbSNP:rs278981." evidence="4 5">
    <original>M</original>
    <variation>V</variation>
    <location>
        <position position="565"/>
    </location>
</feature>
<feature type="mutagenesis site" description="Loss of function in regulation of alternative splicing. Loss of pre-mRNA binding activity. Decreased homodimerization." evidence="10">
    <original>F</original>
    <variation>A</variation>
    <location>
        <position position="115"/>
    </location>
</feature>
<feature type="mutagenesis site" description="Decreased function in regulation of alternative splicing. Decreased pre-mRNA binding. No effect on homodimerization." evidence="10">
    <original>F</original>
    <variation>A</variation>
    <location>
        <position position="198"/>
    </location>
</feature>
<feature type="mutagenesis site" description="Decreased function in regulation of alternative splicing. No effect on pre-mRNA binding." evidence="10">
    <original>F</original>
    <variation>A</variation>
    <location>
        <position position="285"/>
    </location>
</feature>
<feature type="sequence conflict" description="In Ref. 1; AAM21973." evidence="15" ref="1">
    <original>A</original>
    <variation>T</variation>
    <location>
        <position position="9"/>
    </location>
</feature>
<feature type="sequence conflict" description="In Ref. 2; BAA91049." evidence="15" ref="2">
    <original>I</original>
    <variation>T</variation>
    <location>
        <position position="97"/>
    </location>
</feature>
<feature type="sequence conflict" description="In Ref. 1; AAM21972." evidence="15" ref="1">
    <original>G</original>
    <variation>V</variation>
    <location>
        <position position="515"/>
    </location>
</feature>
<feature type="strand" evidence="19">
    <location>
        <begin position="150"/>
        <end position="156"/>
    </location>
</feature>
<feature type="helix" evidence="19">
    <location>
        <begin position="164"/>
        <end position="174"/>
    </location>
</feature>
<feature type="strand" evidence="19">
    <location>
        <begin position="178"/>
        <end position="182"/>
    </location>
</feature>
<feature type="strand" evidence="19">
    <location>
        <begin position="185"/>
        <end position="187"/>
    </location>
</feature>
<feature type="turn" evidence="19">
    <location>
        <begin position="189"/>
        <end position="193"/>
    </location>
</feature>
<feature type="strand" evidence="19">
    <location>
        <begin position="196"/>
        <end position="203"/>
    </location>
</feature>
<feature type="helix" evidence="19">
    <location>
        <begin position="204"/>
        <end position="211"/>
    </location>
</feature>
<feature type="turn" evidence="19">
    <location>
        <begin position="212"/>
        <end position="216"/>
    </location>
</feature>
<feature type="strand" evidence="19">
    <location>
        <begin position="227"/>
        <end position="231"/>
    </location>
</feature>
<feature type="turn" evidence="19">
    <location>
        <begin position="237"/>
        <end position="239"/>
    </location>
</feature>
<evidence type="ECO:0000250" key="1">
    <source>
        <dbReference type="UniProtKB" id="A0A8M1NHK4"/>
    </source>
</evidence>
<evidence type="ECO:0000255" key="2">
    <source>
        <dbReference type="PROSITE-ProRule" id="PRU00176"/>
    </source>
</evidence>
<evidence type="ECO:0000256" key="3">
    <source>
        <dbReference type="SAM" id="MobiDB-lite"/>
    </source>
</evidence>
<evidence type="ECO:0000269" key="4">
    <source>
    </source>
</evidence>
<evidence type="ECO:0000269" key="5">
    <source>
    </source>
</evidence>
<evidence type="ECO:0000269" key="6">
    <source>
    </source>
</evidence>
<evidence type="ECO:0000269" key="7">
    <source>
    </source>
</evidence>
<evidence type="ECO:0000269" key="8">
    <source>
    </source>
</evidence>
<evidence type="ECO:0000269" key="9">
    <source>
    </source>
</evidence>
<evidence type="ECO:0000269" key="10">
    <source>
    </source>
</evidence>
<evidence type="ECO:0000269" key="11">
    <source>
    </source>
</evidence>
<evidence type="ECO:0000269" key="12">
    <source>
    </source>
</evidence>
<evidence type="ECO:0000303" key="13">
    <source>
    </source>
</evidence>
<evidence type="ECO:0000303" key="14">
    <source>
    </source>
</evidence>
<evidence type="ECO:0000305" key="15"/>
<evidence type="ECO:0000305" key="16">
    <source>
    </source>
</evidence>
<evidence type="ECO:0000312" key="17">
    <source>
        <dbReference type="HGNC" id="HGNC:30358"/>
    </source>
</evidence>
<evidence type="ECO:0007744" key="18">
    <source>
    </source>
</evidence>
<evidence type="ECO:0007829" key="19">
    <source>
        <dbReference type="PDB" id="2DIS"/>
    </source>
</evidence>
<proteinExistence type="evidence at protein level"/>
<name>RBM47_HUMAN</name>